<protein>
    <recommendedName>
        <fullName evidence="22 25">Glycinin G2</fullName>
        <shortName evidence="26">Glycinin 11S G2</shortName>
        <shortName evidence="23">Glycinin A2B1a</shortName>
    </recommendedName>
    <allergenName evidence="26">Gly m 6</allergenName>
    <component>
        <recommendedName>
            <fullName evidence="22 23">Glycinin A2 subunit</fullName>
        </recommendedName>
    </component>
    <component>
        <recommendedName>
            <fullName evidence="22 23">Glycinin B1a subunit</fullName>
        </recommendedName>
    </component>
</protein>
<organism>
    <name type="scientific">Glycine max</name>
    <name type="common">Soybean</name>
    <name type="synonym">Glycine hispida</name>
    <dbReference type="NCBI Taxonomy" id="3847"/>
    <lineage>
        <taxon>Eukaryota</taxon>
        <taxon>Viridiplantae</taxon>
        <taxon>Streptophyta</taxon>
        <taxon>Embryophyta</taxon>
        <taxon>Tracheophyta</taxon>
        <taxon>Spermatophyta</taxon>
        <taxon>Magnoliopsida</taxon>
        <taxon>eudicotyledons</taxon>
        <taxon>Gunneridae</taxon>
        <taxon>Pentapetalae</taxon>
        <taxon>rosids</taxon>
        <taxon>fabids</taxon>
        <taxon>Fabales</taxon>
        <taxon>Fabaceae</taxon>
        <taxon>Papilionoideae</taxon>
        <taxon>50 kb inversion clade</taxon>
        <taxon>NPAAA clade</taxon>
        <taxon>indigoferoid/millettioid clade</taxon>
        <taxon>Phaseoleae</taxon>
        <taxon>Glycine</taxon>
        <taxon>Glycine subgen. Soja</taxon>
    </lineage>
</organism>
<accession>P04405</accession>
<accession>P04121</accession>
<accession>P04348</accession>
<accession>P04349</accession>
<accession>Q549Z4</accession>
<gene>
    <name evidence="25" type="primary">GY2</name>
    <name evidence="26" type="ordered locus">Glyma03g32020</name>
</gene>
<reference key="1">
    <citation type="journal article" date="1989" name="Plant Cell">
        <title>Characterization of the glycinin gene family in soybean.</title>
        <authorList>
            <person name="Nielsen N.C."/>
            <person name="Dickinson C.D."/>
            <person name="Cho T.-J."/>
            <person name="Thanh V.H."/>
            <person name="Scallon B.J."/>
            <person name="Fischer R.L."/>
            <person name="Sims T.L."/>
            <person name="Drews G.N."/>
            <person name="Goldberg R.B."/>
        </authorList>
    </citation>
    <scope>NUCLEOTIDE SEQUENCE</scope>
    <scope>FUNCTION</scope>
    <scope>TISSUE SPECIFICITY</scope>
    <scope>DEVELOPMENTAL STAGE</scope>
    <scope>GENE FAMILY</scope>
    <source>
        <strain>cv. Dare</strain>
        <tissue>Leaf</tissue>
    </source>
</reference>
<reference key="2">
    <citation type="journal article" date="1989" name="Nucleic Acids Res.">
        <title>The glycinin Gy2 gene from soybean.</title>
        <authorList>
            <person name="Thanh V.H."/>
            <person name="Tumer N.E."/>
            <person name="Nielsen N.C."/>
        </authorList>
    </citation>
    <scope>NUCLEOTIDE SEQUENCE [GENOMIC DNA]</scope>
    <source>
        <strain>cv. Dare</strain>
        <tissue>Leaf</tissue>
    </source>
</reference>
<reference key="3">
    <citation type="journal article" date="1987" name="Agric. Biol. Chem.">
        <title>Polymorphism and expression of cDNAs encoding glycinin subunits.</title>
        <authorList>
            <person name="Utsumi S."/>
            <person name="Kim C.S."/>
            <person name="Kohno M."/>
            <person name="Kito M."/>
        </authorList>
    </citation>
    <scope>NUCLEOTIDE SEQUENCE [MRNA]</scope>
    <source>
        <strain>cv. Shirotsurunoko</strain>
    </source>
</reference>
<reference key="4">
    <citation type="journal article" date="1987" name="Nucleic Acids Res.">
        <title>Complete nucleotide sequence of the gene encoding a glycinin A2B1a subunit precursor of soybean.</title>
        <authorList>
            <person name="Fukazawa C."/>
            <person name="Momma T."/>
            <person name="Higuchi W."/>
            <person name="Udaka K."/>
        </authorList>
    </citation>
    <scope>NUCLEOTIDE SEQUENCE [GENOMIC DNA]</scope>
</reference>
<reference key="5">
    <citation type="journal article" date="1985" name="FEBS Lett.">
        <title>A complete cDNA coding for the sequence of glycinin A2B1a subunit precursor.</title>
        <authorList>
            <person name="Momma T."/>
            <person name="Negoro T."/>
            <person name="Udaka K."/>
            <person name="Fukazawa C."/>
        </authorList>
    </citation>
    <scope>NUCLEOTIDE SEQUENCE [MRNA]</scope>
</reference>
<reference key="6">
    <citation type="submission" date="2003-06" db="EMBL/GenBank/DDBJ databases">
        <title>mRNA of Soybean Proglycinin A2B1 Subunit.</title>
        <authorList>
            <person name="Urade R."/>
            <person name="Nakatani H."/>
        </authorList>
    </citation>
    <scope>NUCLEOTIDE SEQUENCE [MRNA]</scope>
    <source>
        <strain>cv. Jack</strain>
    </source>
</reference>
<reference key="7">
    <citation type="journal article" date="2010" name="Nature">
        <title>Genome sequence of the palaeopolyploid soybean.</title>
        <authorList>
            <person name="Schmutz J."/>
            <person name="Cannon S.B."/>
            <person name="Schlueter J."/>
            <person name="Ma J."/>
            <person name="Mitros T."/>
            <person name="Nelson W."/>
            <person name="Hyten D.L."/>
            <person name="Song Q."/>
            <person name="Thelen J.J."/>
            <person name="Cheng J."/>
            <person name="Xu D."/>
            <person name="Hellsten U."/>
            <person name="May G.D."/>
            <person name="Yu Y."/>
            <person name="Sakurai T."/>
            <person name="Umezawa T."/>
            <person name="Bhattacharyya M.K."/>
            <person name="Sandhu D."/>
            <person name="Valliyodan B."/>
            <person name="Lindquist E."/>
            <person name="Peto M."/>
            <person name="Grant D."/>
            <person name="Shu S."/>
            <person name="Goodstein D."/>
            <person name="Barry K."/>
            <person name="Futrell-Griggs M."/>
            <person name="Abernathy B."/>
            <person name="Du J."/>
            <person name="Tian Z."/>
            <person name="Zhu L."/>
            <person name="Gill N."/>
            <person name="Joshi T."/>
            <person name="Libault M."/>
            <person name="Sethuraman A."/>
            <person name="Zhang X.-C."/>
            <person name="Shinozaki K."/>
            <person name="Nguyen H.T."/>
            <person name="Wing R.A."/>
            <person name="Cregan P."/>
            <person name="Specht J."/>
            <person name="Grimwood J."/>
            <person name="Rokhsar D."/>
            <person name="Stacey G."/>
            <person name="Shoemaker R.C."/>
            <person name="Jackson S.A."/>
        </authorList>
    </citation>
    <scope>NUCLEOTIDE SEQUENCE [LARGE SCALE GENOMIC DNA]</scope>
    <source>
        <strain>cv. Williams 82</strain>
        <tissue>Callus</tissue>
    </source>
</reference>
<reference key="8">
    <citation type="journal article" date="1984" name="J. Biol. Chem.">
        <title>The amino acid sequence of the A2B1a subunit of glycinin.</title>
        <authorList>
            <person name="Staswick P.E."/>
            <person name="Hermodson M.A."/>
            <person name="Nielsen N.C."/>
        </authorList>
    </citation>
    <scope>PROTEIN SEQUENCE OF 19-296 AND 301-480 (A2 AND B1A SUBUNITS)</scope>
</reference>
<reference key="9">
    <citation type="journal article" date="1984" name="J. Biol. Chem.">
        <title>Cloning and structural analysis of DNA encoding an A2B1a subunit of glycinin.</title>
        <authorList>
            <person name="Marco Y.A."/>
            <person name="Thanh V.H."/>
            <person name="Tumer N.E."/>
            <person name="Scallon B.J."/>
            <person name="Nielsen N.C."/>
        </authorList>
    </citation>
    <scope>NUCLEOTIDE SEQUENCE [GENOMIC DNA] OF 262-485</scope>
</reference>
<reference evidence="27" key="10">
    <citation type="journal article" date="1990" name="Nucleic Acids Res.">
        <title>The complete nucleotide sequence of soybean glycinin A2B1a gene spanning to another glycinin gene A1aB1b.</title>
        <authorList>
            <person name="Kitamura Y."/>
            <person name="Arahira M."/>
            <person name="Itoh Y."/>
            <person name="Fukazawa C."/>
        </authorList>
    </citation>
    <scope>NUCLEOTIDE SEQUENCE [GENOMIC DNA] OF 1-36</scope>
</reference>
<reference key="11">
    <citation type="journal article" date="1996" name="Eur. J. Biochem.">
        <title>Limited proteolysis of beta-conglycinin and glycinin, the 7S and 11S storage globulins from soybean [Glycine max (L.) Merr.]. Structural and evolutionary implications.</title>
        <authorList>
            <person name="Shutov A.D."/>
            <person name="Kakhovskaya I.A."/>
            <person name="Bastrygina A.S."/>
            <person name="Bulmaga V.P."/>
            <person name="Horstmann C."/>
            <person name="Muntz K."/>
        </authorList>
    </citation>
    <scope>PROTEIN SEQUENCE OF 115-136 AND 202-224 (A2 SUBUNIT)</scope>
    <source>
        <strain>cv. Kishinevskaya-16</strain>
    </source>
</reference>
<reference key="12">
    <citation type="journal article" date="1984" name="J. Biol. Chem.">
        <title>Identification of the cystines which link the acidic and basic components of the glycinin subunits.</title>
        <authorList>
            <person name="Staswick P.E."/>
            <person name="Hermodson M.A."/>
            <person name="Nielsen N.C."/>
        </authorList>
    </citation>
    <scope>DISULFIDE BOND</scope>
</reference>
<reference key="13">
    <citation type="journal article" date="2000" name="J. Biotechnol.">
        <title>The effect of pH on heat denaturation and gel forming properties of soy proteins.</title>
        <authorList>
            <person name="Renkema J.M."/>
            <person name="Lakemond C.M."/>
            <person name="de Jongh H.H."/>
            <person name="Gruppen H."/>
            <person name="van Vliet T."/>
        </authorList>
    </citation>
    <scope>BIOTECHNOLOGY</scope>
</reference>
<reference key="14">
    <citation type="journal article" date="2007" name="Plant Physiol. Biochem.">
        <title>Proteomic and genetic analysis of glycinin subunits of sixteen soybean genotypes.</title>
        <authorList>
            <person name="Natarajan S."/>
            <person name="Xu C."/>
            <person name="Bae H."/>
            <person name="Bailey B.A."/>
            <person name="Cregan P."/>
            <person name="Caperna T.J."/>
            <person name="Garrett W.M."/>
            <person name="Luthria D."/>
        </authorList>
    </citation>
    <scope>POLYMORPHISM</scope>
    <scope>IDENTIFICATION BY MASS SPECTROMETRY</scope>
</reference>
<reference key="15">
    <citation type="journal article" date="2009" name="J. Allergy Clin. Immunol.">
        <title>Soybean (Glycine max) allergy in Europe: Gly m 5 (beta-conglycinin) and Gly m 6 (glycinin) are potential diagnostic markers for severe allergic reactions to soy.</title>
        <authorList>
            <person name="Holzhauser T."/>
            <person name="Wackermann O."/>
            <person name="Ballmer-Weber B.K."/>
            <person name="Bindslev-Jensen C."/>
            <person name="Scibilia J."/>
            <person name="Perono-Garoffo L."/>
            <person name="Utsumi S."/>
            <person name="Poulsen L.K."/>
            <person name="Vieths S."/>
        </authorList>
    </citation>
    <scope>ALLERGEN</scope>
</reference>
<reference key="16">
    <citation type="journal article" date="2012" name="Int. J. Food Microbiol.">
        <title>In vitro and in situ antimicrobial action and mechanism of glycinin and its basic subunit.</title>
        <authorList>
            <person name="Sitohy M.Z."/>
            <person name="Mahgoub S.A."/>
            <person name="Osman A.O."/>
        </authorList>
    </citation>
    <scope>FUNCTION</scope>
    <scope>BIOTECHNOLOGY</scope>
</reference>
<reference key="17">
    <citation type="journal article" date="2012" name="Plant Physiol. Biochem.">
        <title>Global gene expression profiles in developing soybean seeds.</title>
        <authorList>
            <person name="Asakura T."/>
            <person name="Tamura T."/>
            <person name="Terauchi K."/>
            <person name="Narikawa T."/>
            <person name="Yagasaki K."/>
            <person name="Ishimaru Y."/>
            <person name="Abe K."/>
        </authorList>
    </citation>
    <scope>TISSUE SPECIFICITY</scope>
    <scope>DEVELOPMENTAL STAGE</scope>
</reference>
<reference key="18">
    <citation type="journal article" date="2013" name="Acta Crystallogr. F">
        <title>Purification, crystallization and preliminary crystallographic analysis of soybean mature glycinin A1bB2.</title>
        <authorList>
            <person name="Prak K."/>
            <person name="Mikami B."/>
            <person name="Itoh T."/>
            <person name="Fukuda T."/>
            <person name="Maruyama N."/>
            <person name="Utsumi S."/>
        </authorList>
    </citation>
    <scope>GENE FAMILY</scope>
    <scope>NOMENCLATURE</scope>
</reference>
<reference key="19">
    <citation type="journal article" date="2013" name="J. Sci. Food Agric.">
        <title>Epitopes from two soybean glycinin subunits are antigenic in pigs.</title>
        <authorList>
            <person name="Taliercio E."/>
            <person name="Kim S.W."/>
        </authorList>
    </citation>
    <scope>ALLERGEN</scope>
</reference>
<reference key="20">
    <citation type="journal article" date="2014" name="Crit. Rev. Food Sci. Nutr.">
        <title>Advances of research on glycinin and beta-conglycinin: a review of two major soybean allergenic proteins.</title>
        <authorList>
            <person name="Wang T."/>
            <person name="Qin G.-X."/>
            <person name="Sun Z.-W."/>
            <person name="Zhao Y."/>
        </authorList>
    </citation>
    <scope>ALLERGEN</scope>
    <scope>REVIEW</scope>
</reference>
<reference key="21">
    <citation type="journal article" date="2015" name="Innovative Food Sci. Emerg. Technol.">
        <title>Antibacterial activities and membrane permeability actions of glycinin basic peptide against Escherichia coli.</title>
        <authorList>
            <person name="Li Y.-Q."/>
            <person name="Sun X.-X."/>
            <person name="Feng J.-L."/>
            <person name="Mo H.-Z."/>
        </authorList>
    </citation>
    <scope>FUNCTION</scope>
    <scope>BIOTECHNOLOGY</scope>
</reference>
<reference key="22">
    <citation type="journal article" date="2016" name="Food Sci. Biotechnol.">
        <title>Effects of glycinin basic polypeptide on sensory and physicochemical properties of chilled pork.</title>
        <authorList>
            <person name="Li Y.-Q."/>
            <person name="Hao M."/>
            <person name="Yang J."/>
            <person name="Mo H.-Z."/>
        </authorList>
    </citation>
    <scope>BIOTECHNOLOGY</scope>
</reference>
<reference key="23">
    <citation type="journal article" date="2016" name="J. Sci. Food Agric.">
        <title>Thermal aggregation behaviour of soy protein: characteristics of different polypeptides and sub-units.</title>
        <authorList>
            <person name="He X.-T."/>
            <person name="Yuan D.-B."/>
            <person name="Wang J.-M."/>
            <person name="Yang X.-Q."/>
        </authorList>
    </citation>
    <scope>BIOTECHNOLOGY</scope>
</reference>
<reference key="24">
    <citation type="journal article" date="2017" name="J. Agric. Food Chem.">
        <title>Antibacterial actions of glycinin basic peptide against Escherichia coli.</title>
        <authorList>
            <person name="Zhao G.-P."/>
            <person name="Li Y.-Q."/>
            <person name="Sun G.-J."/>
            <person name="Mo H.-Z."/>
        </authorList>
    </citation>
    <scope>FUNCTION</scope>
    <scope>BIOTECHNOLOGY</scope>
</reference>
<reference key="25">
    <citation type="journal article" date="2017" name="J. Sci. Food Agric.">
        <title>The structural properties and antigenicity of soybean glycinin by glycation with xylose.</title>
        <authorList>
            <person name="Bu G."/>
            <person name="Zhu T."/>
            <person name="Chen F."/>
        </authorList>
    </citation>
    <scope>ALLERGEN</scope>
</reference>
<reference key="26">
    <citation type="journal article" date="2018" name="Food Chem.">
        <title>Peptides derived from in vitro gastrointestinal digestion of germinated soybean proteins inhibit human colon cancer cells proliferation and inflammation.</title>
        <authorList>
            <person name="Gonzalez-Montoya M."/>
            <person name="Hernandez-Ledesma B."/>
            <person name="Silvan J.M."/>
            <person name="Mora-Escobedo R."/>
            <person name="Martinez-Villaluenga C."/>
        </authorList>
    </citation>
    <scope>PTM</scope>
    <scope>BIOTECHNOLOGY</scope>
    <scope>IDENTIFICATION BY MASS SPECTROMETRY</scope>
</reference>
<reference key="27">
    <citation type="journal article" date="2018" name="Int. J. Mol. Sci.">
        <title>Bioactive peptides from germinated soybean with anti-diabetic potential by inhibition of dipeptidyl peptidase-IV, alpha-amylase, and alpha-glucosidase enzymes.</title>
        <authorList>
            <person name="Gonzalez-Montoya M."/>
            <person name="Hernandez-Ledesma B."/>
            <person name="Mora-Escobedo R."/>
            <person name="Martinez-Villaluenga C."/>
        </authorList>
    </citation>
    <scope>BIOTECHNOLOGY</scope>
    <scope>IDENTIFICATION BY MASS SPECTROMETRY</scope>
</reference>
<reference key="28">
    <citation type="journal article" date="2018" name="J. Agric. Food Chem.">
        <title>Soybean Glycinin- and beta-Conglycinin-Induced Intestinal Damage in Piglets via the p38/JNK/NF-kappaB Signaling Pathway.</title>
        <authorList>
            <person name="Peng C."/>
            <person name="Cao C."/>
            <person name="He M."/>
            <person name="Shu Y."/>
            <person name="Tang X."/>
            <person name="Wang Y."/>
            <person name="Zhang Y."/>
            <person name="Xia X."/>
            <person name="Li Y."/>
            <person name="Wu J."/>
        </authorList>
    </citation>
    <scope>ALLERGEN</scope>
</reference>
<reference key="29">
    <citation type="journal article" date="2018" name="J. Agric. Food Chem.">
        <title>Molecular Mechanism for Improving Emulsification Efficiency of Soy Glycinin by Glycation with Soy Soluble Polysaccharide.</title>
        <authorList>
            <person name="Peng X.Q."/>
            <person name="Xu Y.T."/>
            <person name="Liu T.X."/>
            <person name="Tang C.H."/>
        </authorList>
    </citation>
    <scope>BIOTECHNOLOGY</scope>
</reference>
<reference key="30">
    <citation type="journal article" date="2019" name="Fish Shellfish Immunol.">
        <title>Effects of glycinin and beta-conglycinin on growth performance and intestinal health in juvenile Chinese mitten crabs (Eriocheir sinensis).</title>
        <authorList>
            <person name="Han F."/>
            <person name="Wang X."/>
            <person name="Guo J."/>
            <person name="Qi C."/>
            <person name="Xu C."/>
            <person name="Luo Y."/>
            <person name="Li E."/>
            <person name="Qin J.G."/>
            <person name="Chen L."/>
        </authorList>
    </citation>
    <scope>ALLERGEN</scope>
</reference>
<proteinExistence type="evidence at protein level"/>
<keyword id="KW-0020">Allergen</keyword>
<keyword id="KW-0903">Direct protein sequencing</keyword>
<keyword id="KW-1015">Disulfide bond</keyword>
<keyword id="KW-0256">Endoplasmic reticulum</keyword>
<keyword id="KW-1185">Reference proteome</keyword>
<keyword id="KW-0708">Seed storage protein</keyword>
<keyword id="KW-0732">Signal</keyword>
<keyword id="KW-0758">Storage protein</keyword>
<keyword id="KW-0926">Vacuole</keyword>
<name>GLYG2_SOYBN</name>
<feature type="signal peptide" evidence="19">
    <location>
        <begin position="1"/>
        <end position="18"/>
    </location>
</feature>
<feature type="chain" id="PRO_0000032013" description="Glycinin A2 subunit">
    <location>
        <begin position="19"/>
        <end position="296"/>
    </location>
</feature>
<feature type="propeptide" id="PRO_0000032014" evidence="19">
    <location>
        <begin position="297"/>
        <end position="300"/>
    </location>
</feature>
<feature type="chain" id="PRO_0000032015" description="Glycinin B1a subunit">
    <location>
        <begin position="301"/>
        <end position="480"/>
    </location>
</feature>
<feature type="propeptide" id="PRO_0000032016">
    <location>
        <begin position="481"/>
        <end position="485"/>
    </location>
</feature>
<feature type="domain" description="Cupin type-1 1" evidence="2">
    <location>
        <begin position="33"/>
        <end position="238"/>
    </location>
</feature>
<feature type="domain" description="Cupin type-1 2" evidence="2">
    <location>
        <begin position="313"/>
        <end position="462"/>
    </location>
</feature>
<feature type="region of interest" description="Disordered" evidence="3">
    <location>
        <begin position="108"/>
        <end position="130"/>
    </location>
</feature>
<feature type="region of interest" description="Disordered" evidence="3">
    <location>
        <begin position="192"/>
        <end position="215"/>
    </location>
</feature>
<feature type="region of interest" description="Disordered" evidence="3">
    <location>
        <begin position="262"/>
        <end position="298"/>
    </location>
</feature>
<feature type="short sequence motif" description="Vacuolar targeting signal" evidence="1">
    <location>
        <begin position="476"/>
        <end position="485"/>
    </location>
</feature>
<feature type="compositionally biased region" description="Polar residues" evidence="3">
    <location>
        <begin position="108"/>
        <end position="118"/>
    </location>
</feature>
<feature type="compositionally biased region" description="Low complexity" evidence="3">
    <location>
        <begin position="192"/>
        <end position="205"/>
    </location>
</feature>
<feature type="compositionally biased region" description="Acidic residues" evidence="3">
    <location>
        <begin position="272"/>
        <end position="281"/>
    </location>
</feature>
<feature type="disulfide bond" evidence="1">
    <location>
        <begin position="28"/>
        <end position="61"/>
    </location>
</feature>
<feature type="disulfide bond" description="Interchain (between A2 and B1a chains)" evidence="20">
    <location>
        <begin position="104"/>
        <end position="307"/>
    </location>
</feature>
<feature type="sequence variant">
    <original>G</original>
    <variation>D</variation>
    <location>
        <position position="103"/>
    </location>
</feature>
<feature type="sequence variant">
    <original>N</original>
    <variation>T</variation>
    <location>
        <position position="318"/>
    </location>
</feature>
<feature type="sequence variant">
    <original>I</original>
    <variation>V</variation>
    <location>
        <position position="331"/>
    </location>
</feature>
<feature type="sequence variant">
    <original>K</original>
    <variation>R</variation>
    <location>
        <position position="413"/>
    </location>
</feature>
<feature type="sequence conflict" description="In Ref. 5; CAA26575." evidence="26" ref="5">
    <original>D</original>
    <variation>G</variation>
    <location>
        <position position="39"/>
    </location>
</feature>
<feature type="sequence conflict" description="In Ref. 8; AA sequence." evidence="26" ref="8">
    <original>D</original>
    <variation>N</variation>
    <location>
        <position position="39"/>
    </location>
</feature>
<feature type="sequence conflict" description="In Ref. 8; AA sequence." evidence="26" ref="8">
    <original>C</original>
    <variation>S</variation>
    <location>
        <position position="61"/>
    </location>
</feature>
<feature type="sequence conflict" description="In Ref. 8; AA sequence." evidence="26" ref="8">
    <original>R</original>
    <variation>C</variation>
    <location>
        <position position="117"/>
    </location>
</feature>
<feature type="sequence conflict" description="In Ref. 8; AA sequence." evidence="26" ref="8">
    <original>W</original>
    <variation>S</variation>
    <location>
        <position position="343"/>
    </location>
</feature>
<dbReference type="EMBL" id="X15122">
    <property type="protein sequence ID" value="CAA33216.1"/>
    <property type="molecule type" value="Genomic_DNA"/>
</dbReference>
<dbReference type="EMBL" id="D00216">
    <property type="protein sequence ID" value="BAA00154.1"/>
    <property type="molecule type" value="mRNA"/>
</dbReference>
<dbReference type="EMBL" id="Y00398">
    <property type="protein sequence ID" value="CAA68460.1"/>
    <property type="molecule type" value="Genomic_DNA"/>
</dbReference>
<dbReference type="EMBL" id="X02806">
    <property type="protein sequence ID" value="CAA26575.1"/>
    <property type="molecule type" value="mRNA"/>
</dbReference>
<dbReference type="EMBL" id="AB113350">
    <property type="protein sequence ID" value="BAC78523.1"/>
    <property type="molecule type" value="mRNA"/>
</dbReference>
<dbReference type="EMBL" id="CM000836">
    <property type="protein sequence ID" value="KRH67383.1"/>
    <property type="molecule type" value="Genomic_DNA"/>
</dbReference>
<dbReference type="EMBL" id="K02646">
    <property type="protein sequence ID" value="AAA33963.1"/>
    <property type="molecule type" value="Genomic_DNA"/>
</dbReference>
<dbReference type="EMBL" id="X53404">
    <property type="protein sequence ID" value="CAA37480.1"/>
    <property type="molecule type" value="Genomic_DNA"/>
</dbReference>
<dbReference type="PIR" id="A91341">
    <property type="entry name" value="FWSYG1"/>
</dbReference>
<dbReference type="PIR" id="S11002">
    <property type="entry name" value="S11002"/>
</dbReference>
<dbReference type="RefSeq" id="NP_001235810.1">
    <property type="nucleotide sequence ID" value="NM_001248881.1"/>
</dbReference>
<dbReference type="SMR" id="P04405"/>
<dbReference type="FunCoup" id="P04405">
    <property type="interactions" value="742"/>
</dbReference>
<dbReference type="STRING" id="3847.P04405"/>
<dbReference type="Allergome" id="1143">
    <property type="allergen name" value="Gly m 6.0201"/>
</dbReference>
<dbReference type="Allergome" id="5821">
    <property type="allergen name" value="Gly m 6"/>
</dbReference>
<dbReference type="EnsemblPlants" id="KRH67383">
    <property type="protein sequence ID" value="KRH67383"/>
    <property type="gene ID" value="GLYMA_03G163500"/>
</dbReference>
<dbReference type="GeneID" id="547900"/>
<dbReference type="Gramene" id="KRH67383">
    <property type="protein sequence ID" value="KRH67383"/>
    <property type="gene ID" value="GLYMA_03G163500"/>
</dbReference>
<dbReference type="KEGG" id="gmx:547900"/>
<dbReference type="InParanoid" id="P04405"/>
<dbReference type="OMA" id="QAKHYQG"/>
<dbReference type="OrthoDB" id="1389300at2759"/>
<dbReference type="Proteomes" id="UP000008827">
    <property type="component" value="Chromosome 3"/>
</dbReference>
<dbReference type="GO" id="GO:0005783">
    <property type="term" value="C:endoplasmic reticulum"/>
    <property type="evidence" value="ECO:0000250"/>
    <property type="project" value="UniProtKB"/>
</dbReference>
<dbReference type="GO" id="GO:0000326">
    <property type="term" value="C:protein storage vacuole"/>
    <property type="evidence" value="ECO:0000250"/>
    <property type="project" value="UniProtKB"/>
</dbReference>
<dbReference type="GO" id="GO:0045735">
    <property type="term" value="F:nutrient reservoir activity"/>
    <property type="evidence" value="ECO:0007669"/>
    <property type="project" value="UniProtKB-KW"/>
</dbReference>
<dbReference type="CDD" id="cd02243">
    <property type="entry name" value="cupin_11S_legumin_C"/>
    <property type="match status" value="1"/>
</dbReference>
<dbReference type="CDD" id="cd02242">
    <property type="entry name" value="cupin_11S_legumin_N"/>
    <property type="match status" value="1"/>
</dbReference>
<dbReference type="FunFam" id="2.60.120.10:FF:000073">
    <property type="entry name" value="Glycinin G1"/>
    <property type="match status" value="1"/>
</dbReference>
<dbReference type="FunFam" id="2.60.120.10:FF:000124">
    <property type="entry name" value="Glycinin G5"/>
    <property type="match status" value="1"/>
</dbReference>
<dbReference type="Gene3D" id="2.60.120.10">
    <property type="entry name" value="Jelly Rolls"/>
    <property type="match status" value="2"/>
</dbReference>
<dbReference type="InterPro" id="IPR022379">
    <property type="entry name" value="11S_seedstore_CS"/>
</dbReference>
<dbReference type="InterPro" id="IPR006044">
    <property type="entry name" value="11S_seedstore_pln"/>
</dbReference>
<dbReference type="InterPro" id="IPR006045">
    <property type="entry name" value="Cupin_1"/>
</dbReference>
<dbReference type="InterPro" id="IPR014710">
    <property type="entry name" value="RmlC-like_jellyroll"/>
</dbReference>
<dbReference type="InterPro" id="IPR011051">
    <property type="entry name" value="RmlC_Cupin_sf"/>
</dbReference>
<dbReference type="InterPro" id="IPR050253">
    <property type="entry name" value="Seed_Storage-Functional"/>
</dbReference>
<dbReference type="PANTHER" id="PTHR31189:SF77">
    <property type="entry name" value="GLYCININ G3"/>
    <property type="match status" value="1"/>
</dbReference>
<dbReference type="PANTHER" id="PTHR31189">
    <property type="entry name" value="OS03G0336100 PROTEIN-RELATED"/>
    <property type="match status" value="1"/>
</dbReference>
<dbReference type="Pfam" id="PF00190">
    <property type="entry name" value="Cupin_1"/>
    <property type="match status" value="2"/>
</dbReference>
<dbReference type="PRINTS" id="PR00439">
    <property type="entry name" value="11SGLOBULIN"/>
</dbReference>
<dbReference type="SMART" id="SM00835">
    <property type="entry name" value="Cupin_1"/>
    <property type="match status" value="2"/>
</dbReference>
<dbReference type="SUPFAM" id="SSF51182">
    <property type="entry name" value="RmlC-like cupins"/>
    <property type="match status" value="1"/>
</dbReference>
<dbReference type="PROSITE" id="PS00305">
    <property type="entry name" value="11S_SEED_STORAGE"/>
    <property type="match status" value="1"/>
</dbReference>
<comment type="function">
    <text evidence="6 9 12 21">Glycinin is the major seed storage protein of soybean (PubMed:2485233). Glycinin basic peptides (GBPs), and, to a lower extent, glycinin exhibit antibacterial activity against Gram-negative and Gram-positive bacteria (e.g. L.monocytogenes, B.subtilis, E.coli and S.enteritidis) by forming pores and aggregating in transmembranes, leading to membrane permeability and, eventually, cell death (PubMed:22236762, PubMed:28590128, Ref.21).</text>
</comment>
<comment type="subunit">
    <text evidence="1">Hexamer; each subunit is composed of an acidic and a basic chain derived from a single precursor and linked by a disulfide bond.</text>
</comment>
<comment type="subcellular location">
    <subcellularLocation>
        <location evidence="1">Endoplasmic reticulum</location>
    </subcellularLocation>
    <subcellularLocation>
        <location evidence="1">Protein storage vacuole</location>
    </subcellularLocation>
    <text evidence="1">Hexamers are assembled in the endoplasmic reticulum and later sorted to the protein storage vacuoles.</text>
</comment>
<comment type="tissue specificity">
    <text evidence="7 9">Exclusively in seeds during embryogenesis.</text>
</comment>
<comment type="developmental stage">
    <text evidence="7 9">Accumulates early during embryogenesis, but repressed late in seed development (PubMed:2485233). Progressive level increase from pod to full-size seed growth (PubMed:22245912).</text>
</comment>
<comment type="PTM">
    <text evidence="13">During soybean germination, seed storage proteins are hydrolyzed by protease/26S proteasome.</text>
</comment>
<comment type="allergen">
    <text evidence="5 8 11 14 17 24">Causes an allergic reaction in human and animals (e.g. rats, mouse and piglets); the acidic subunit is particularly allergenic (PubMed:18996574, PubMed:23426933, PubMed:24499064). Binds to IgE of patients with severe allergic reactions (anaphylaxis) to soybean (PubMed:18996574). Allergy to soybean is most common for infants (usually appears at the age of three months) which frequently outgrow their soybean allergy by the age of two, but a severe soybean allergy can last a lifetime; various symptoms involve skin, gastrointestinal tract and respiratory tracts (PubMed:24499064). Damaged intestinal function in piglets is associated with glycinin-mediated perturbation of nuclear factor-kappa B (NF-kappaB), Jun N-terminal kinase (JNK) and p38 levels (PubMed:30139257). Juvenile Chinese mitten crabs (E.sinensis) supplemented with glycinin display impaired growth and altered intestinal health due to gut inflammation, reshaped community of gut microbiota and digestive dysfunction (PubMed:30300740). Ingredient processing methods to reduce soybean allergenicity but keeping its nutritional values have been developed, among them physical processing includes extrusion, high-pressure (&gt;300 MPa), heating (between 70 and 90 degrees Celsius), roasting, chemical processing includes ethanol extraction (55-76 percent between 70 and 80 degrees Celsius), in vitro glycation (e.g. with xylose at 55 degrees Celsius) and enzymatic hydrolysis with pepsin and trypsin, and biological processing includes fermentation with A.oryzae, S.cerevisiae, L.lactic subsplactis, B.subtilis, B.lactic and L.plantarum (PubMed:24499064, PubMed:27620509). Resistant to hydrolysis by papain, alcalase, and fungal protease (PubMed:24499064).</text>
</comment>
<comment type="biotechnology">
    <text evidence="4 6 10 12 13 15 16 18 21">Emulsification efficiency of glycinin is improved by degree-dependent glycation with soy soluble polysaccharide (SSPS) at 60 degrees Celsius in both the acidic (A) and basic (B) polypeptides as a result of subunit dissociation at the quaternary level (PubMed:30372068). Thermal treatment of soybean seed proteins leads to the aggregation of glycinin acidic and basic polypeptides (GAP and GBP, respectively) (PubMed:10867183, PubMed:25801436). GBP improve sensory properties of meat (e.g. pork) during chilled storage and inhibit bacterial growth (e.g. L.monocytogenes, B.subtilis, E.coli and S.enteritidis) (PubMed:22236762, PubMed:30263339). Antibacterial properties of the GBP antimicrobial peptides (AMPs) associated with no cytotoxicity on the viability of human embryonic kidney cells make them promising candidates as natural antibacterial agents (PubMed:22236762, PubMed:28590128, Ref.21). Fragmented peptides resulting from gastrointestinal digestion of germinated soybeans seem to have anticancer and anti-inflammatory actions on human colon cancer cells (e.g. Caco-2, HT-29, and HCT-116) and macrophages (LPS-stimulated RAW 264.7) (PubMed:29037738). Such peptides resulting from digested germinated soybeans exhibit also anti-diabetic potential by inhibiting dipeptidyl peptidase IV (DPP-IV), salivary alpha-amylase and intestinal alpha-glucosidase enzymes (PubMed:30249015).</text>
</comment>
<comment type="similarity">
    <text evidence="26">Belongs to the 11S seed storage protein (globulins) family.</text>
</comment>
<sequence>MAKLVLSLCFLLFSGCFALREQAQQNECQIQKLNALKPDNRIESEGGFIETWNPNNKPFQCAGVALSRCTLNRNALRRPSYTNGPQEIYIQQGNGIFGMIFPGCPSTYQEPQESQQRGRSQRPQDRHQKVHRFREGDLIAVPTGVAWWMYNNEDTPVVAVSIIDTNSLENQLDQMPRRFYLAGNQEQEFLKYQQQQQGGSQSQKGKQQEEENEGSNILSGFAPEFLKEAFGVNMQIVRNLQGENEEEDSGAIVTVKGGLRVTAPAMRKPQQEEDDDDEEEQPQCVETDKGCQRQSKRSRNGIDETICTMRLRQNIGQNSSPDIYNPQAGSITTATSLDFPALWLLKLSAQYGSLRKNAMFVPHYTLNANSIIYALNGRALVQVVNCNGERVFDGELQEGGVLIVPQNFAVAAKSQSDNFEYVSFKTNDRPSIGNLAGANSLLNALPEEVIQHTFNLKSQQARQVKNNNPFSFLVPPQESQRRAVA</sequence>
<evidence type="ECO:0000250" key="1">
    <source>
        <dbReference type="UniProtKB" id="P04776"/>
    </source>
</evidence>
<evidence type="ECO:0000255" key="2"/>
<evidence type="ECO:0000256" key="3">
    <source>
        <dbReference type="SAM" id="MobiDB-lite"/>
    </source>
</evidence>
<evidence type="ECO:0000269" key="4">
    <source>
    </source>
</evidence>
<evidence type="ECO:0000269" key="5">
    <source>
    </source>
</evidence>
<evidence type="ECO:0000269" key="6">
    <source>
    </source>
</evidence>
<evidence type="ECO:0000269" key="7">
    <source>
    </source>
</evidence>
<evidence type="ECO:0000269" key="8">
    <source>
    </source>
</evidence>
<evidence type="ECO:0000269" key="9">
    <source>
    </source>
</evidence>
<evidence type="ECO:0000269" key="10">
    <source>
    </source>
</evidence>
<evidence type="ECO:0000269" key="11">
    <source>
    </source>
</evidence>
<evidence type="ECO:0000269" key="12">
    <source>
    </source>
</evidence>
<evidence type="ECO:0000269" key="13">
    <source>
    </source>
</evidence>
<evidence type="ECO:0000269" key="14">
    <source>
    </source>
</evidence>
<evidence type="ECO:0000269" key="15">
    <source>
    </source>
</evidence>
<evidence type="ECO:0000269" key="16">
    <source>
    </source>
</evidence>
<evidence type="ECO:0000269" key="17">
    <source>
    </source>
</evidence>
<evidence type="ECO:0000269" key="18">
    <source>
    </source>
</evidence>
<evidence type="ECO:0000269" key="19">
    <source>
    </source>
</evidence>
<evidence type="ECO:0000269" key="20">
    <source>
    </source>
</evidence>
<evidence type="ECO:0000269" key="21">
    <source ref="21"/>
</evidence>
<evidence type="ECO:0000303" key="22">
    <source>
    </source>
</evidence>
<evidence type="ECO:0000303" key="23">
    <source>
    </source>
</evidence>
<evidence type="ECO:0000303" key="24">
    <source>
    </source>
</evidence>
<evidence type="ECO:0000303" key="25">
    <source>
    </source>
</evidence>
<evidence type="ECO:0000305" key="26"/>
<evidence type="ECO:0000312" key="27">
    <source>
        <dbReference type="EMBL" id="CAA37480.1"/>
    </source>
</evidence>